<accession>O08858</accession>
<accession>A6H6N8</accession>
<accession>O08998</accession>
<accession>Q3UZM7</accession>
<evidence type="ECO:0000250" key="1"/>
<evidence type="ECO:0000255" key="2"/>
<evidence type="ECO:0000255" key="3">
    <source>
        <dbReference type="PROSITE-ProRule" id="PRU00521"/>
    </source>
</evidence>
<evidence type="ECO:0000256" key="4">
    <source>
        <dbReference type="SAM" id="MobiDB-lite"/>
    </source>
</evidence>
<evidence type="ECO:0000269" key="5">
    <source>
    </source>
</evidence>
<evidence type="ECO:0000269" key="6">
    <source>
    </source>
</evidence>
<evidence type="ECO:0000305" key="7"/>
<sequence>MEPLSLTSTPSWNASAASSSSHNWSLVDPVSPMGARAVLVPVLYLLVCTVGLGGNTLVIYVVLRYAKMKTVTNVYILNLAVADVLFMLGLPFLATQNAVSYWPFGSFLCRLVMTLDGINQFTSIFCLMVMSVDRYLAVVHPLRSARWRRPRVAKLASAAVWVFSLLMSLPLLVFADVQEGWGTCNLSWPEPVGLWGAAFITYTSVLGFFGPLLVICLCYLLIVVKVKAAGMRVGSSRRRRSERKVTRMVVVVVLVFVGCWLPFFIVNIVNLAFTLPEEPTSAGLYFFVVVLSYANSCANPLLYGFLSDNFRQSFRKALCLRRGYGVEDADAIEPRPDKSGRPQTTLPTRSCEANGLMQTSRL</sequence>
<protein>
    <recommendedName>
        <fullName>Somatostatin receptor type 5</fullName>
        <shortName>SS-5-R</shortName>
        <shortName>SS5-R</shortName>
        <shortName>SS5R</shortName>
    </recommendedName>
</protein>
<comment type="function">
    <text>Receptor for somatostatin-28. The activity of this receptor is mediated by G proteins which inhibit adenylyl cyclase. Increases cell growth inhibition activity of SSTR2 following heterodimerization.</text>
</comment>
<comment type="subunit">
    <text evidence="1">Heterodimer with SSTR2. Heterodimerization with SSTR2 increases cell growth inhibition activity of SSTR2 (By similarity).</text>
</comment>
<comment type="subcellular location">
    <subcellularLocation>
        <location evidence="5">Cell membrane</location>
        <topology evidence="5">Multi-pass membrane protein</topology>
    </subcellularLocation>
</comment>
<comment type="tissue specificity">
    <text evidence="6">Expressed in adult brain but not in liver, heart, spleen, or kidney.</text>
</comment>
<comment type="PTM">
    <text evidence="5">Palmitoylated at Cys-319 by ZDHHC5, but not ZDHHC8. Palmitoylation creates an additional intracellular loop which is thought to be important for efficient coupling to G-proteins and may target the protein to lipid rafts.</text>
</comment>
<comment type="similarity">
    <text evidence="3">Belongs to the G-protein coupled receptor 1 family.</text>
</comment>
<comment type="sequence caution" evidence="7">
    <conflict type="erroneous initiation">
        <sequence resource="EMBL-CDS" id="AAB88302"/>
    </conflict>
    <text>Extended N-terminus.</text>
</comment>
<dbReference type="EMBL" id="U82697">
    <property type="protein sequence ID" value="AAC53353.1"/>
    <property type="molecule type" value="Genomic_DNA"/>
</dbReference>
<dbReference type="EMBL" id="AF004740">
    <property type="protein sequence ID" value="AAB61418.1"/>
    <property type="molecule type" value="Genomic_DNA"/>
</dbReference>
<dbReference type="EMBL" id="AF030441">
    <property type="protein sequence ID" value="AAB86492.1"/>
    <property type="molecule type" value="Genomic_DNA"/>
</dbReference>
<dbReference type="EMBL" id="AF035777">
    <property type="protein sequence ID" value="AAB88302.1"/>
    <property type="status" value="ALT_INIT"/>
    <property type="molecule type" value="Genomic_DNA"/>
</dbReference>
<dbReference type="EMBL" id="AK133609">
    <property type="protein sequence ID" value="BAE21747.1"/>
    <property type="molecule type" value="mRNA"/>
</dbReference>
<dbReference type="EMBL" id="AK133767">
    <property type="protein sequence ID" value="BAE21829.1"/>
    <property type="molecule type" value="mRNA"/>
</dbReference>
<dbReference type="EMBL" id="AC131323">
    <property type="status" value="NOT_ANNOTATED_CDS"/>
    <property type="molecule type" value="Genomic_DNA"/>
</dbReference>
<dbReference type="EMBL" id="BC145943">
    <property type="protein sequence ID" value="AAI45944.1"/>
    <property type="molecule type" value="mRNA"/>
</dbReference>
<dbReference type="EMBL" id="BC150805">
    <property type="protein sequence ID" value="AAI50806.1"/>
    <property type="molecule type" value="mRNA"/>
</dbReference>
<dbReference type="CCDS" id="CCDS28520.1"/>
<dbReference type="RefSeq" id="NP_001177937.1">
    <property type="nucleotide sequence ID" value="NM_001191008.1"/>
</dbReference>
<dbReference type="RefSeq" id="NP_035555.1">
    <property type="nucleotide sequence ID" value="NM_011425.3"/>
</dbReference>
<dbReference type="SMR" id="O08858"/>
<dbReference type="CORUM" id="O08858"/>
<dbReference type="FunCoup" id="O08858">
    <property type="interactions" value="857"/>
</dbReference>
<dbReference type="IntAct" id="O08858">
    <property type="interactions" value="1"/>
</dbReference>
<dbReference type="MINT" id="O08858"/>
<dbReference type="STRING" id="10090.ENSMUSP00000051085"/>
<dbReference type="BindingDB" id="O08858"/>
<dbReference type="ChEMBL" id="CHEMBL2733"/>
<dbReference type="DrugCentral" id="O08858"/>
<dbReference type="GuidetoPHARMACOLOGY" id="359"/>
<dbReference type="GlyCosmos" id="O08858">
    <property type="glycosylation" value="3 sites, No reported glycans"/>
</dbReference>
<dbReference type="GlyGen" id="O08858">
    <property type="glycosylation" value="4 sites"/>
</dbReference>
<dbReference type="PhosphoSitePlus" id="O08858"/>
<dbReference type="SwissPalm" id="O08858"/>
<dbReference type="PaxDb" id="10090-ENSMUSP00000051085"/>
<dbReference type="Antibodypedia" id="3358">
    <property type="antibodies" value="313 antibodies from 36 providers"/>
</dbReference>
<dbReference type="DNASU" id="20609"/>
<dbReference type="Ensembl" id="ENSMUST00000051864.6">
    <property type="protein sequence ID" value="ENSMUSP00000051085.5"/>
    <property type="gene ID" value="ENSMUSG00000050824.14"/>
</dbReference>
<dbReference type="Ensembl" id="ENSMUST00000165183.11">
    <property type="protein sequence ID" value="ENSMUSP00000128787.3"/>
    <property type="gene ID" value="ENSMUSG00000050824.14"/>
</dbReference>
<dbReference type="Ensembl" id="ENSMUST00000249773.1">
    <property type="protein sequence ID" value="ENSMUSP00000159927.1"/>
    <property type="gene ID" value="ENSMUSG00000050824.14"/>
</dbReference>
<dbReference type="Ensembl" id="ENSMUST00000249774.1">
    <property type="protein sequence ID" value="ENSMUSP00000159928.1"/>
    <property type="gene ID" value="ENSMUSG00000050824.14"/>
</dbReference>
<dbReference type="Ensembl" id="ENSMUST00000249775.1">
    <property type="protein sequence ID" value="ENSMUSP00000159929.1"/>
    <property type="gene ID" value="ENSMUSG00000050824.14"/>
</dbReference>
<dbReference type="GeneID" id="20609"/>
<dbReference type="KEGG" id="mmu:20609"/>
<dbReference type="UCSC" id="uc008bax.2">
    <property type="organism name" value="mouse"/>
</dbReference>
<dbReference type="AGR" id="MGI:894282"/>
<dbReference type="CTD" id="6755"/>
<dbReference type="MGI" id="MGI:894282">
    <property type="gene designation" value="Sstr5"/>
</dbReference>
<dbReference type="VEuPathDB" id="HostDB:ENSMUSG00000050824"/>
<dbReference type="eggNOG" id="KOG3656">
    <property type="taxonomic scope" value="Eukaryota"/>
</dbReference>
<dbReference type="GeneTree" id="ENSGT00940000160265"/>
<dbReference type="HOGENOM" id="CLU_009579_8_1_1"/>
<dbReference type="InParanoid" id="O08858"/>
<dbReference type="OMA" id="QEDFQTC"/>
<dbReference type="OrthoDB" id="6076970at2759"/>
<dbReference type="PhylomeDB" id="O08858"/>
<dbReference type="TreeFam" id="TF315737"/>
<dbReference type="Reactome" id="R-MMU-375276">
    <property type="pathway name" value="Peptide ligand-binding receptors"/>
</dbReference>
<dbReference type="Reactome" id="R-MMU-418594">
    <property type="pathway name" value="G alpha (i) signalling events"/>
</dbReference>
<dbReference type="BioGRID-ORCS" id="20609">
    <property type="hits" value="1 hit in 79 CRISPR screens"/>
</dbReference>
<dbReference type="PRO" id="PR:O08858"/>
<dbReference type="Proteomes" id="UP000000589">
    <property type="component" value="Chromosome 17"/>
</dbReference>
<dbReference type="RNAct" id="O08858">
    <property type="molecule type" value="protein"/>
</dbReference>
<dbReference type="Bgee" id="ENSMUSG00000050824">
    <property type="expression patterns" value="Expressed in epiblast cell in embryo and 14 other cell types or tissues"/>
</dbReference>
<dbReference type="GO" id="GO:0005886">
    <property type="term" value="C:plasma membrane"/>
    <property type="evidence" value="ECO:0000314"/>
    <property type="project" value="MGI"/>
</dbReference>
<dbReference type="GO" id="GO:0004994">
    <property type="term" value="F:somatostatin receptor activity"/>
    <property type="evidence" value="ECO:0007669"/>
    <property type="project" value="InterPro"/>
</dbReference>
<dbReference type="GO" id="GO:0042593">
    <property type="term" value="P:glucose homeostasis"/>
    <property type="evidence" value="ECO:0000315"/>
    <property type="project" value="MGI"/>
</dbReference>
<dbReference type="GO" id="GO:0032467">
    <property type="term" value="P:positive regulation of cytokinesis"/>
    <property type="evidence" value="ECO:0007669"/>
    <property type="project" value="Ensembl"/>
</dbReference>
<dbReference type="GO" id="GO:0050796">
    <property type="term" value="P:regulation of insulin secretion"/>
    <property type="evidence" value="ECO:0000315"/>
    <property type="project" value="MGI"/>
</dbReference>
<dbReference type="FunFam" id="1.20.1070.10:FF:000039">
    <property type="entry name" value="somatostatin receptor type 2"/>
    <property type="match status" value="1"/>
</dbReference>
<dbReference type="Gene3D" id="1.20.1070.10">
    <property type="entry name" value="Rhodopsin 7-helix transmembrane proteins"/>
    <property type="match status" value="1"/>
</dbReference>
<dbReference type="InterPro" id="IPR000276">
    <property type="entry name" value="GPCR_Rhodpsn"/>
</dbReference>
<dbReference type="InterPro" id="IPR017452">
    <property type="entry name" value="GPCR_Rhodpsn_7TM"/>
</dbReference>
<dbReference type="InterPro" id="IPR000586">
    <property type="entry name" value="Somatstn_rcpt"/>
</dbReference>
<dbReference type="InterPro" id="IPR001184">
    <property type="entry name" value="Somatstn_rcpt_5"/>
</dbReference>
<dbReference type="PANTHER" id="PTHR24229">
    <property type="entry name" value="NEUROPEPTIDES RECEPTOR"/>
    <property type="match status" value="1"/>
</dbReference>
<dbReference type="PANTHER" id="PTHR24229:SF20">
    <property type="entry name" value="SOMATOSTATIN RECEPTOR TYPE 5"/>
    <property type="match status" value="1"/>
</dbReference>
<dbReference type="Pfam" id="PF00001">
    <property type="entry name" value="7tm_1"/>
    <property type="match status" value="1"/>
</dbReference>
<dbReference type="PRINTS" id="PR00237">
    <property type="entry name" value="GPCRRHODOPSN"/>
</dbReference>
<dbReference type="PRINTS" id="PR00246">
    <property type="entry name" value="SOMATOSTATNR"/>
</dbReference>
<dbReference type="PRINTS" id="PR00591">
    <property type="entry name" value="SOMATOSTTN5R"/>
</dbReference>
<dbReference type="SMART" id="SM01381">
    <property type="entry name" value="7TM_GPCR_Srsx"/>
    <property type="match status" value="1"/>
</dbReference>
<dbReference type="SUPFAM" id="SSF81321">
    <property type="entry name" value="Family A G protein-coupled receptor-like"/>
    <property type="match status" value="1"/>
</dbReference>
<dbReference type="PROSITE" id="PS00237">
    <property type="entry name" value="G_PROTEIN_RECEP_F1_1"/>
    <property type="match status" value="1"/>
</dbReference>
<dbReference type="PROSITE" id="PS50262">
    <property type="entry name" value="G_PROTEIN_RECEP_F1_2"/>
    <property type="match status" value="1"/>
</dbReference>
<reference key="1">
    <citation type="journal article" date="1997" name="Gene">
        <title>Isolation and characterization of the gene encoding the type 5 mouse (Mus musculus) somatostatin receptor (msst5).</title>
        <authorList>
            <person name="Lublin A.L."/>
            <person name="Diehl N.L."/>
            <person name="Hochgeschwender U."/>
        </authorList>
    </citation>
    <scope>NUCLEOTIDE SEQUENCE [GENOMIC DNA]</scope>
    <scope>TISSUE SPECIFICITY</scope>
    <source>
        <strain>129/SvJ</strain>
        <tissue>Liver</tissue>
    </source>
</reference>
<reference key="2">
    <citation type="submission" date="1997-06" db="EMBL/GenBank/DDBJ databases">
        <authorList>
            <person name="Moldovan S."/>
            <person name="DeMayo F."/>
            <person name="Brunicardi F.C."/>
        </authorList>
    </citation>
    <scope>NUCLEOTIDE SEQUENCE [GENOMIC DNA]</scope>
    <source>
        <strain>129/SvJ</strain>
    </source>
</reference>
<reference key="3">
    <citation type="submission" date="1997-10" db="EMBL/GenBank/DDBJ databases">
        <authorList>
            <person name="Gordon D.F."/>
            <person name="Woodmansee W.W."/>
            <person name="Wood W.M."/>
            <person name="Knauf H."/>
            <person name="James R.A."/>
        </authorList>
    </citation>
    <scope>NUCLEOTIDE SEQUENCE [GENOMIC DNA]</scope>
    <source>
        <strain>BALB/cJ</strain>
        <tissue>Liver</tissue>
    </source>
</reference>
<reference key="4">
    <citation type="submission" date="1997-12" db="EMBL/GenBank/DDBJ databases">
        <authorList>
            <person name="Baumeister H."/>
            <person name="Roosterman D."/>
            <person name="Schafer J."/>
            <person name="Kreuzer O."/>
            <person name="Meyerhof W."/>
        </authorList>
    </citation>
    <scope>NUCLEOTIDE SEQUENCE [GENOMIC DNA]</scope>
    <source>
        <strain>129/SvJ</strain>
    </source>
</reference>
<reference key="5">
    <citation type="journal article" date="2005" name="Science">
        <title>The transcriptional landscape of the mammalian genome.</title>
        <authorList>
            <person name="Carninci P."/>
            <person name="Kasukawa T."/>
            <person name="Katayama S."/>
            <person name="Gough J."/>
            <person name="Frith M.C."/>
            <person name="Maeda N."/>
            <person name="Oyama R."/>
            <person name="Ravasi T."/>
            <person name="Lenhard B."/>
            <person name="Wells C."/>
            <person name="Kodzius R."/>
            <person name="Shimokawa K."/>
            <person name="Bajic V.B."/>
            <person name="Brenner S.E."/>
            <person name="Batalov S."/>
            <person name="Forrest A.R."/>
            <person name="Zavolan M."/>
            <person name="Davis M.J."/>
            <person name="Wilming L.G."/>
            <person name="Aidinis V."/>
            <person name="Allen J.E."/>
            <person name="Ambesi-Impiombato A."/>
            <person name="Apweiler R."/>
            <person name="Aturaliya R.N."/>
            <person name="Bailey T.L."/>
            <person name="Bansal M."/>
            <person name="Baxter L."/>
            <person name="Beisel K.W."/>
            <person name="Bersano T."/>
            <person name="Bono H."/>
            <person name="Chalk A.M."/>
            <person name="Chiu K.P."/>
            <person name="Choudhary V."/>
            <person name="Christoffels A."/>
            <person name="Clutterbuck D.R."/>
            <person name="Crowe M.L."/>
            <person name="Dalla E."/>
            <person name="Dalrymple B.P."/>
            <person name="de Bono B."/>
            <person name="Della Gatta G."/>
            <person name="di Bernardo D."/>
            <person name="Down T."/>
            <person name="Engstrom P."/>
            <person name="Fagiolini M."/>
            <person name="Faulkner G."/>
            <person name="Fletcher C.F."/>
            <person name="Fukushima T."/>
            <person name="Furuno M."/>
            <person name="Futaki S."/>
            <person name="Gariboldi M."/>
            <person name="Georgii-Hemming P."/>
            <person name="Gingeras T.R."/>
            <person name="Gojobori T."/>
            <person name="Green R.E."/>
            <person name="Gustincich S."/>
            <person name="Harbers M."/>
            <person name="Hayashi Y."/>
            <person name="Hensch T.K."/>
            <person name="Hirokawa N."/>
            <person name="Hill D."/>
            <person name="Huminiecki L."/>
            <person name="Iacono M."/>
            <person name="Ikeo K."/>
            <person name="Iwama A."/>
            <person name="Ishikawa T."/>
            <person name="Jakt M."/>
            <person name="Kanapin A."/>
            <person name="Katoh M."/>
            <person name="Kawasawa Y."/>
            <person name="Kelso J."/>
            <person name="Kitamura H."/>
            <person name="Kitano H."/>
            <person name="Kollias G."/>
            <person name="Krishnan S.P."/>
            <person name="Kruger A."/>
            <person name="Kummerfeld S.K."/>
            <person name="Kurochkin I.V."/>
            <person name="Lareau L.F."/>
            <person name="Lazarevic D."/>
            <person name="Lipovich L."/>
            <person name="Liu J."/>
            <person name="Liuni S."/>
            <person name="McWilliam S."/>
            <person name="Madan Babu M."/>
            <person name="Madera M."/>
            <person name="Marchionni L."/>
            <person name="Matsuda H."/>
            <person name="Matsuzawa S."/>
            <person name="Miki H."/>
            <person name="Mignone F."/>
            <person name="Miyake S."/>
            <person name="Morris K."/>
            <person name="Mottagui-Tabar S."/>
            <person name="Mulder N."/>
            <person name="Nakano N."/>
            <person name="Nakauchi H."/>
            <person name="Ng P."/>
            <person name="Nilsson R."/>
            <person name="Nishiguchi S."/>
            <person name="Nishikawa S."/>
            <person name="Nori F."/>
            <person name="Ohara O."/>
            <person name="Okazaki Y."/>
            <person name="Orlando V."/>
            <person name="Pang K.C."/>
            <person name="Pavan W.J."/>
            <person name="Pavesi G."/>
            <person name="Pesole G."/>
            <person name="Petrovsky N."/>
            <person name="Piazza S."/>
            <person name="Reed J."/>
            <person name="Reid J.F."/>
            <person name="Ring B.Z."/>
            <person name="Ringwald M."/>
            <person name="Rost B."/>
            <person name="Ruan Y."/>
            <person name="Salzberg S.L."/>
            <person name="Sandelin A."/>
            <person name="Schneider C."/>
            <person name="Schoenbach C."/>
            <person name="Sekiguchi K."/>
            <person name="Semple C.A."/>
            <person name="Seno S."/>
            <person name="Sessa L."/>
            <person name="Sheng Y."/>
            <person name="Shibata Y."/>
            <person name="Shimada H."/>
            <person name="Shimada K."/>
            <person name="Silva D."/>
            <person name="Sinclair B."/>
            <person name="Sperling S."/>
            <person name="Stupka E."/>
            <person name="Sugiura K."/>
            <person name="Sultana R."/>
            <person name="Takenaka Y."/>
            <person name="Taki K."/>
            <person name="Tammoja K."/>
            <person name="Tan S.L."/>
            <person name="Tang S."/>
            <person name="Taylor M.S."/>
            <person name="Tegner J."/>
            <person name="Teichmann S.A."/>
            <person name="Ueda H.R."/>
            <person name="van Nimwegen E."/>
            <person name="Verardo R."/>
            <person name="Wei C.L."/>
            <person name="Yagi K."/>
            <person name="Yamanishi H."/>
            <person name="Zabarovsky E."/>
            <person name="Zhu S."/>
            <person name="Zimmer A."/>
            <person name="Hide W."/>
            <person name="Bult C."/>
            <person name="Grimmond S.M."/>
            <person name="Teasdale R.D."/>
            <person name="Liu E.T."/>
            <person name="Brusic V."/>
            <person name="Quackenbush J."/>
            <person name="Wahlestedt C."/>
            <person name="Mattick J.S."/>
            <person name="Hume D.A."/>
            <person name="Kai C."/>
            <person name="Sasaki D."/>
            <person name="Tomaru Y."/>
            <person name="Fukuda S."/>
            <person name="Kanamori-Katayama M."/>
            <person name="Suzuki M."/>
            <person name="Aoki J."/>
            <person name="Arakawa T."/>
            <person name="Iida J."/>
            <person name="Imamura K."/>
            <person name="Itoh M."/>
            <person name="Kato T."/>
            <person name="Kawaji H."/>
            <person name="Kawagashira N."/>
            <person name="Kawashima T."/>
            <person name="Kojima M."/>
            <person name="Kondo S."/>
            <person name="Konno H."/>
            <person name="Nakano K."/>
            <person name="Ninomiya N."/>
            <person name="Nishio T."/>
            <person name="Okada M."/>
            <person name="Plessy C."/>
            <person name="Shibata K."/>
            <person name="Shiraki T."/>
            <person name="Suzuki S."/>
            <person name="Tagami M."/>
            <person name="Waki K."/>
            <person name="Watahiki A."/>
            <person name="Okamura-Oho Y."/>
            <person name="Suzuki H."/>
            <person name="Kawai J."/>
            <person name="Hayashizaki Y."/>
        </authorList>
    </citation>
    <scope>NUCLEOTIDE SEQUENCE [LARGE SCALE MRNA]</scope>
    <source>
        <strain>C57BL/6J</strain>
        <tissue>Pituitary</tissue>
    </source>
</reference>
<reference key="6">
    <citation type="journal article" date="2009" name="PLoS Biol.">
        <title>Lineage-specific biology revealed by a finished genome assembly of the mouse.</title>
        <authorList>
            <person name="Church D.M."/>
            <person name="Goodstadt L."/>
            <person name="Hillier L.W."/>
            <person name="Zody M.C."/>
            <person name="Goldstein S."/>
            <person name="She X."/>
            <person name="Bult C.J."/>
            <person name="Agarwala R."/>
            <person name="Cherry J.L."/>
            <person name="DiCuccio M."/>
            <person name="Hlavina W."/>
            <person name="Kapustin Y."/>
            <person name="Meric P."/>
            <person name="Maglott D."/>
            <person name="Birtle Z."/>
            <person name="Marques A.C."/>
            <person name="Graves T."/>
            <person name="Zhou S."/>
            <person name="Teague B."/>
            <person name="Potamousis K."/>
            <person name="Churas C."/>
            <person name="Place M."/>
            <person name="Herschleb J."/>
            <person name="Runnheim R."/>
            <person name="Forrest D."/>
            <person name="Amos-Landgraf J."/>
            <person name="Schwartz D.C."/>
            <person name="Cheng Z."/>
            <person name="Lindblad-Toh K."/>
            <person name="Eichler E.E."/>
            <person name="Ponting C.P."/>
        </authorList>
    </citation>
    <scope>NUCLEOTIDE SEQUENCE [LARGE SCALE GENOMIC DNA]</scope>
    <source>
        <strain>C57BL/6J</strain>
    </source>
</reference>
<reference key="7">
    <citation type="journal article" date="2004" name="Genome Res.">
        <title>The status, quality, and expansion of the NIH full-length cDNA project: the Mammalian Gene Collection (MGC).</title>
        <authorList>
            <consortium name="The MGC Project Team"/>
        </authorList>
    </citation>
    <scope>NUCLEOTIDE SEQUENCE [LARGE SCALE MRNA]</scope>
    <source>
        <tissue>Brain</tissue>
    </source>
</reference>
<reference key="8">
    <citation type="journal article" date="2011" name="FEBS Lett.">
        <title>Somatostatin receptor 5 is palmitoylated by the interacting ZDHHC5 palmitoyltransferase.</title>
        <authorList>
            <person name="Kokkola T."/>
            <person name="Kruse C."/>
            <person name="Roy-Pogodzik E.M."/>
            <person name="Pekkinen J."/>
            <person name="Bauch C."/>
            <person name="Honck H.H."/>
            <person name="Hennemann H."/>
            <person name="Kreienkamp H.J."/>
        </authorList>
    </citation>
    <scope>TOPOLOGY</scope>
    <scope>SUBCELLULAR LOCATION</scope>
    <scope>PALMITOYLATION AT CYS-319</scope>
</reference>
<keyword id="KW-1003">Cell membrane</keyword>
<keyword id="KW-1015">Disulfide bond</keyword>
<keyword id="KW-0297">G-protein coupled receptor</keyword>
<keyword id="KW-0325">Glycoprotein</keyword>
<keyword id="KW-0449">Lipoprotein</keyword>
<keyword id="KW-0472">Membrane</keyword>
<keyword id="KW-0564">Palmitate</keyword>
<keyword id="KW-0675">Receptor</keyword>
<keyword id="KW-1185">Reference proteome</keyword>
<keyword id="KW-0807">Transducer</keyword>
<keyword id="KW-0812">Transmembrane</keyword>
<keyword id="KW-1133">Transmembrane helix</keyword>
<proteinExistence type="evidence at protein level"/>
<name>SSR5_MOUSE</name>
<organism>
    <name type="scientific">Mus musculus</name>
    <name type="common">Mouse</name>
    <dbReference type="NCBI Taxonomy" id="10090"/>
    <lineage>
        <taxon>Eukaryota</taxon>
        <taxon>Metazoa</taxon>
        <taxon>Chordata</taxon>
        <taxon>Craniata</taxon>
        <taxon>Vertebrata</taxon>
        <taxon>Euteleostomi</taxon>
        <taxon>Mammalia</taxon>
        <taxon>Eutheria</taxon>
        <taxon>Euarchontoglires</taxon>
        <taxon>Glires</taxon>
        <taxon>Rodentia</taxon>
        <taxon>Myomorpha</taxon>
        <taxon>Muroidea</taxon>
        <taxon>Muridae</taxon>
        <taxon>Murinae</taxon>
        <taxon>Mus</taxon>
        <taxon>Mus</taxon>
    </lineage>
</organism>
<gene>
    <name type="primary">Sstr5</name>
    <name type="synonym">Smstr5</name>
</gene>
<feature type="chain" id="PRO_0000070131" description="Somatostatin receptor type 5">
    <location>
        <begin position="1"/>
        <end position="362"/>
    </location>
</feature>
<feature type="topological domain" description="Extracellular" evidence="2">
    <location>
        <begin position="1"/>
        <end position="35"/>
    </location>
</feature>
<feature type="transmembrane region" description="Helical; Name=1" evidence="2">
    <location>
        <begin position="36"/>
        <end position="63"/>
    </location>
</feature>
<feature type="topological domain" description="Cytoplasmic" evidence="2">
    <location>
        <begin position="64"/>
        <end position="73"/>
    </location>
</feature>
<feature type="transmembrane region" description="Helical; Name=2" evidence="2">
    <location>
        <begin position="74"/>
        <end position="99"/>
    </location>
</feature>
<feature type="topological domain" description="Extracellular" evidence="2">
    <location>
        <begin position="100"/>
        <end position="110"/>
    </location>
</feature>
<feature type="transmembrane region" description="Helical; Name=3" evidence="2">
    <location>
        <begin position="111"/>
        <end position="132"/>
    </location>
</feature>
<feature type="topological domain" description="Cytoplasmic" evidence="2">
    <location>
        <begin position="133"/>
        <end position="154"/>
    </location>
</feature>
<feature type="transmembrane region" description="Helical; Name=4" evidence="2">
    <location>
        <begin position="155"/>
        <end position="175"/>
    </location>
</feature>
<feature type="topological domain" description="Extracellular" evidence="2">
    <location>
        <begin position="176"/>
        <end position="195"/>
    </location>
</feature>
<feature type="transmembrane region" description="Helical; Name=5" evidence="2">
    <location>
        <begin position="196"/>
        <end position="220"/>
    </location>
</feature>
<feature type="topological domain" description="Cytoplasmic" evidence="2">
    <location>
        <begin position="221"/>
        <end position="246"/>
    </location>
</feature>
<feature type="transmembrane region" description="Helical; Name=6" evidence="2">
    <location>
        <begin position="247"/>
        <end position="272"/>
    </location>
</feature>
<feature type="topological domain" description="Extracellular" evidence="2">
    <location>
        <begin position="273"/>
        <end position="282"/>
    </location>
</feature>
<feature type="transmembrane region" description="Helical; Name=7" evidence="2">
    <location>
        <begin position="283"/>
        <end position="307"/>
    </location>
</feature>
<feature type="topological domain" description="Cytoplasmic" evidence="2">
    <location>
        <begin position="308"/>
        <end position="362"/>
    </location>
</feature>
<feature type="region of interest" description="Disordered" evidence="4">
    <location>
        <begin position="1"/>
        <end position="24"/>
    </location>
</feature>
<feature type="region of interest" description="Disordered" evidence="4">
    <location>
        <begin position="330"/>
        <end position="362"/>
    </location>
</feature>
<feature type="compositionally biased region" description="Polar residues" evidence="4">
    <location>
        <begin position="1"/>
        <end position="10"/>
    </location>
</feature>
<feature type="compositionally biased region" description="Low complexity" evidence="4">
    <location>
        <begin position="11"/>
        <end position="24"/>
    </location>
</feature>
<feature type="lipid moiety-binding region" description="S-palmitoyl cysteine; by ZDHHC5" evidence="5">
    <location>
        <position position="319"/>
    </location>
</feature>
<feature type="glycosylation site" description="N-linked (GlcNAc...) asparagine" evidence="2">
    <location>
        <position position="13"/>
    </location>
</feature>
<feature type="glycosylation site" description="N-linked (GlcNAc...) asparagine" evidence="2">
    <location>
        <position position="23"/>
    </location>
</feature>
<feature type="glycosylation site" description="N-linked (GlcNAc...) asparagine" evidence="2">
    <location>
        <position position="185"/>
    </location>
</feature>
<feature type="disulfide bond" evidence="3">
    <location>
        <begin position="109"/>
        <end position="184"/>
    </location>
</feature>
<feature type="sequence conflict" description="In Ref. 1; AAC53353, 2; AAB61418, 3; AAB86492, 4; AAB88302 and 7; AAI45944/AAI50806." evidence="7" ref="1 2 3 4 7">
    <original>T</original>
    <variation>A</variation>
    <location>
        <position position="7"/>
    </location>
</feature>
<feature type="sequence conflict" description="In Ref. 1; AAC53353, 2; AAB61418, 3; AAB86492, 4; AAB88302 and 7; AAI45944/AAI50806." evidence="7" ref="1 2 3 4 7">
    <original>S</original>
    <variation>G</variation>
    <location>
        <position position="20"/>
    </location>
</feature>
<feature type="sequence conflict" description="In Ref. 1; AAC53353." evidence="7" ref="1">
    <original>V</original>
    <variation>VV</variation>
    <location>
        <position position="99"/>
    </location>
</feature>
<feature type="sequence conflict" description="In Ref. 2; AAB61418." evidence="7" ref="2">
    <original>YGF</original>
    <variation>LWL</variation>
    <location>
        <begin position="303"/>
        <end position="305"/>
    </location>
</feature>